<proteinExistence type="inferred from homology"/>
<keyword id="KW-0997">Cell inner membrane</keyword>
<keyword id="KW-1003">Cell membrane</keyword>
<keyword id="KW-0472">Membrane</keyword>
<keyword id="KW-0812">Transmembrane</keyword>
<keyword id="KW-1133">Transmembrane helix</keyword>
<keyword id="KW-0813">Transport</keyword>
<dbReference type="EMBL" id="CU928164">
    <property type="protein sequence ID" value="CAR17592.1"/>
    <property type="molecule type" value="Genomic_DNA"/>
</dbReference>
<dbReference type="RefSeq" id="WP_000046661.1">
    <property type="nucleotide sequence ID" value="NC_011750.1"/>
</dbReference>
<dbReference type="RefSeq" id="YP_002407464.1">
    <property type="nucleotide sequence ID" value="NC_011750.1"/>
</dbReference>
<dbReference type="SMR" id="B7NUP0"/>
<dbReference type="GeneID" id="93775747"/>
<dbReference type="KEGG" id="ect:ECIAI39_1459"/>
<dbReference type="PATRIC" id="fig|585057.6.peg.1524"/>
<dbReference type="HOGENOM" id="CLU_133067_0_4_6"/>
<dbReference type="Proteomes" id="UP000000749">
    <property type="component" value="Chromosome"/>
</dbReference>
<dbReference type="GO" id="GO:0005886">
    <property type="term" value="C:plasma membrane"/>
    <property type="evidence" value="ECO:0007669"/>
    <property type="project" value="UniProtKB-SubCell"/>
</dbReference>
<dbReference type="GO" id="GO:0015199">
    <property type="term" value="F:amino-acid betaine transmembrane transporter activity"/>
    <property type="evidence" value="ECO:0007669"/>
    <property type="project" value="TreeGrafter"/>
</dbReference>
<dbReference type="GO" id="GO:0015297">
    <property type="term" value="F:antiporter activity"/>
    <property type="evidence" value="ECO:0007669"/>
    <property type="project" value="TreeGrafter"/>
</dbReference>
<dbReference type="GO" id="GO:0015220">
    <property type="term" value="F:choline transmembrane transporter activity"/>
    <property type="evidence" value="ECO:0007669"/>
    <property type="project" value="TreeGrafter"/>
</dbReference>
<dbReference type="GO" id="GO:0015606">
    <property type="term" value="F:spermidine transmembrane transporter activity"/>
    <property type="evidence" value="ECO:0007669"/>
    <property type="project" value="UniProtKB-UniRule"/>
</dbReference>
<dbReference type="GO" id="GO:0031460">
    <property type="term" value="P:glycine betaine transport"/>
    <property type="evidence" value="ECO:0007669"/>
    <property type="project" value="TreeGrafter"/>
</dbReference>
<dbReference type="FunFam" id="1.10.3730.20:FF:000001">
    <property type="entry name" value="Quaternary ammonium compound resistance transporter SugE"/>
    <property type="match status" value="1"/>
</dbReference>
<dbReference type="Gene3D" id="1.10.3730.20">
    <property type="match status" value="1"/>
</dbReference>
<dbReference type="HAMAP" id="MF_01597">
    <property type="entry name" value="MdtI"/>
    <property type="match status" value="1"/>
</dbReference>
<dbReference type="InterPro" id="IPR000390">
    <property type="entry name" value="Small_drug/metabolite_transptr"/>
</dbReference>
<dbReference type="InterPro" id="IPR045324">
    <property type="entry name" value="Small_multidrug_res"/>
</dbReference>
<dbReference type="InterPro" id="IPR023737">
    <property type="entry name" value="Spermidine_export_MdtI"/>
</dbReference>
<dbReference type="NCBIfam" id="NF007934">
    <property type="entry name" value="PRK10650.1"/>
    <property type="match status" value="1"/>
</dbReference>
<dbReference type="PANTHER" id="PTHR30561">
    <property type="entry name" value="SMR FAMILY PROTON-DEPENDENT DRUG EFFLUX TRANSPORTER SUGE"/>
    <property type="match status" value="1"/>
</dbReference>
<dbReference type="PANTHER" id="PTHR30561:SF6">
    <property type="entry name" value="SPERMIDINE EXPORT PROTEIN MDTI"/>
    <property type="match status" value="1"/>
</dbReference>
<dbReference type="Pfam" id="PF00893">
    <property type="entry name" value="Multi_Drug_Res"/>
    <property type="match status" value="1"/>
</dbReference>
<dbReference type="SUPFAM" id="SSF103481">
    <property type="entry name" value="Multidrug resistance efflux transporter EmrE"/>
    <property type="match status" value="1"/>
</dbReference>
<protein>
    <recommendedName>
        <fullName evidence="1">Spermidine export protein MdtI</fullName>
    </recommendedName>
</protein>
<sequence>MAQFEWVHAAWLALAIVLEIVANVFLKFSDGFRRKIFGLLSLAAVLAAFSALSQAVKGIDLSVAYALWGGFGIAATLAAGWILFGQRLNRKGWIGLVLLLAGMIMVKLA</sequence>
<reference key="1">
    <citation type="journal article" date="2009" name="PLoS Genet.">
        <title>Organised genome dynamics in the Escherichia coli species results in highly diverse adaptive paths.</title>
        <authorList>
            <person name="Touchon M."/>
            <person name="Hoede C."/>
            <person name="Tenaillon O."/>
            <person name="Barbe V."/>
            <person name="Baeriswyl S."/>
            <person name="Bidet P."/>
            <person name="Bingen E."/>
            <person name="Bonacorsi S."/>
            <person name="Bouchier C."/>
            <person name="Bouvet O."/>
            <person name="Calteau A."/>
            <person name="Chiapello H."/>
            <person name="Clermont O."/>
            <person name="Cruveiller S."/>
            <person name="Danchin A."/>
            <person name="Diard M."/>
            <person name="Dossat C."/>
            <person name="Karoui M.E."/>
            <person name="Frapy E."/>
            <person name="Garry L."/>
            <person name="Ghigo J.M."/>
            <person name="Gilles A.M."/>
            <person name="Johnson J."/>
            <person name="Le Bouguenec C."/>
            <person name="Lescat M."/>
            <person name="Mangenot S."/>
            <person name="Martinez-Jehanne V."/>
            <person name="Matic I."/>
            <person name="Nassif X."/>
            <person name="Oztas S."/>
            <person name="Petit M.A."/>
            <person name="Pichon C."/>
            <person name="Rouy Z."/>
            <person name="Ruf C.S."/>
            <person name="Schneider D."/>
            <person name="Tourret J."/>
            <person name="Vacherie B."/>
            <person name="Vallenet D."/>
            <person name="Medigue C."/>
            <person name="Rocha E.P.C."/>
            <person name="Denamur E."/>
        </authorList>
    </citation>
    <scope>NUCLEOTIDE SEQUENCE [LARGE SCALE GENOMIC DNA]</scope>
    <source>
        <strain>IAI39 / ExPEC</strain>
    </source>
</reference>
<name>MDTI_ECO7I</name>
<gene>
    <name evidence="1" type="primary">mdtI</name>
    <name type="ordered locus">ECIAI39_1459</name>
</gene>
<evidence type="ECO:0000255" key="1">
    <source>
        <dbReference type="HAMAP-Rule" id="MF_01597"/>
    </source>
</evidence>
<comment type="function">
    <text evidence="1">Catalyzes the excretion of spermidine.</text>
</comment>
<comment type="subunit">
    <text evidence="1">Forms a complex with MdtJ.</text>
</comment>
<comment type="subcellular location">
    <subcellularLocation>
        <location evidence="1">Cell inner membrane</location>
        <topology evidence="1">Multi-pass membrane protein</topology>
    </subcellularLocation>
</comment>
<comment type="similarity">
    <text evidence="1">Belongs to the drug/metabolite transporter (DMT) superfamily. Small multidrug resistance (SMR) (TC 2.A.7.1) family. MdtI subfamily.</text>
</comment>
<accession>B7NUP0</accession>
<organism>
    <name type="scientific">Escherichia coli O7:K1 (strain IAI39 / ExPEC)</name>
    <dbReference type="NCBI Taxonomy" id="585057"/>
    <lineage>
        <taxon>Bacteria</taxon>
        <taxon>Pseudomonadati</taxon>
        <taxon>Pseudomonadota</taxon>
        <taxon>Gammaproteobacteria</taxon>
        <taxon>Enterobacterales</taxon>
        <taxon>Enterobacteriaceae</taxon>
        <taxon>Escherichia</taxon>
    </lineage>
</organism>
<feature type="chain" id="PRO_1000197316" description="Spermidine export protein MdtI">
    <location>
        <begin position="1"/>
        <end position="109"/>
    </location>
</feature>
<feature type="transmembrane region" description="Helical" evidence="1">
    <location>
        <begin position="6"/>
        <end position="26"/>
    </location>
</feature>
<feature type="transmembrane region" description="Helical" evidence="1">
    <location>
        <begin position="36"/>
        <end position="56"/>
    </location>
</feature>
<feature type="transmembrane region" description="Helical" evidence="1">
    <location>
        <begin position="64"/>
        <end position="84"/>
    </location>
</feature>
<feature type="transmembrane region" description="Helical" evidence="1">
    <location>
        <begin position="88"/>
        <end position="108"/>
    </location>
</feature>